<protein>
    <recommendedName>
        <fullName>Protein TsgA</fullName>
    </recommendedName>
</protein>
<dbReference type="EMBL" id="AE005674">
    <property type="protein sequence ID" value="AAN44846.1"/>
    <property type="molecule type" value="Genomic_DNA"/>
</dbReference>
<dbReference type="EMBL" id="AE014073">
    <property type="protein sequence ID" value="AAP19332.1"/>
    <property type="molecule type" value="Genomic_DNA"/>
</dbReference>
<dbReference type="RefSeq" id="WP_000185262.1">
    <property type="nucleotide sequence ID" value="NZ_WPGW01000003.1"/>
</dbReference>
<dbReference type="SMR" id="P59269"/>
<dbReference type="STRING" id="198214.SF3383"/>
<dbReference type="PaxDb" id="198214-SF3383"/>
<dbReference type="KEGG" id="sfl:SF3383"/>
<dbReference type="KEGG" id="sfx:S4380"/>
<dbReference type="PATRIC" id="fig|198214.7.peg.3994"/>
<dbReference type="HOGENOM" id="CLU_056916_0_0_6"/>
<dbReference type="Proteomes" id="UP000001006">
    <property type="component" value="Chromosome"/>
</dbReference>
<dbReference type="Proteomes" id="UP000002673">
    <property type="component" value="Chromosome"/>
</dbReference>
<dbReference type="GO" id="GO:0005886">
    <property type="term" value="C:plasma membrane"/>
    <property type="evidence" value="ECO:0007669"/>
    <property type="project" value="UniProtKB-SubCell"/>
</dbReference>
<dbReference type="GO" id="GO:0022857">
    <property type="term" value="F:transmembrane transporter activity"/>
    <property type="evidence" value="ECO:0007669"/>
    <property type="project" value="InterPro"/>
</dbReference>
<dbReference type="CDD" id="cd17333">
    <property type="entry name" value="MFS_FucP_MFSD4_like"/>
    <property type="match status" value="1"/>
</dbReference>
<dbReference type="FunFam" id="1.20.1250.20:FF:000032">
    <property type="entry name" value="Protein TsgA"/>
    <property type="match status" value="1"/>
</dbReference>
<dbReference type="FunFam" id="1.20.1250.20:FF:000052">
    <property type="entry name" value="Protein TsgA"/>
    <property type="match status" value="1"/>
</dbReference>
<dbReference type="Gene3D" id="1.20.1250.20">
    <property type="entry name" value="MFS general substrate transporter like domains"/>
    <property type="match status" value="2"/>
</dbReference>
<dbReference type="HAMAP" id="MF_01044">
    <property type="entry name" value="MFS_TsgA"/>
    <property type="match status" value="1"/>
</dbReference>
<dbReference type="InterPro" id="IPR011701">
    <property type="entry name" value="MFS"/>
</dbReference>
<dbReference type="InterPro" id="IPR020846">
    <property type="entry name" value="MFS_dom"/>
</dbReference>
<dbReference type="InterPro" id="IPR036259">
    <property type="entry name" value="MFS_trans_sf"/>
</dbReference>
<dbReference type="InterPro" id="IPR023528">
    <property type="entry name" value="MFS_TsgA"/>
</dbReference>
<dbReference type="InterPro" id="IPR050375">
    <property type="entry name" value="MFS_TsgA-like"/>
</dbReference>
<dbReference type="NCBIfam" id="NF002982">
    <property type="entry name" value="PRK03699.1"/>
    <property type="match status" value="1"/>
</dbReference>
<dbReference type="PANTHER" id="PTHR43702">
    <property type="entry name" value="L-FUCOSE-PROTON SYMPORTER"/>
    <property type="match status" value="1"/>
</dbReference>
<dbReference type="PANTHER" id="PTHR43702:SF3">
    <property type="entry name" value="PROTEIN TSGA"/>
    <property type="match status" value="1"/>
</dbReference>
<dbReference type="Pfam" id="PF07690">
    <property type="entry name" value="MFS_1"/>
    <property type="match status" value="1"/>
</dbReference>
<dbReference type="SUPFAM" id="SSF103473">
    <property type="entry name" value="MFS general substrate transporter"/>
    <property type="match status" value="1"/>
</dbReference>
<dbReference type="PROSITE" id="PS50850">
    <property type="entry name" value="MFS"/>
    <property type="match status" value="1"/>
</dbReference>
<keyword id="KW-0997">Cell inner membrane</keyword>
<keyword id="KW-1003">Cell membrane</keyword>
<keyword id="KW-0472">Membrane</keyword>
<keyword id="KW-1185">Reference proteome</keyword>
<keyword id="KW-0812">Transmembrane</keyword>
<keyword id="KW-1133">Transmembrane helix</keyword>
<evidence type="ECO:0000250" key="1"/>
<evidence type="ECO:0000255" key="2"/>
<evidence type="ECO:0000305" key="3"/>
<proteinExistence type="inferred from homology"/>
<name>TSGA_SHIFL</name>
<gene>
    <name type="primary">tsgA</name>
    <name type="ordered locus">SF3383</name>
    <name type="ordered locus">S4380</name>
</gene>
<feature type="chain" id="PRO_0000206501" description="Protein TsgA">
    <location>
        <begin position="1"/>
        <end position="393"/>
    </location>
</feature>
<feature type="topological domain" description="Cytoplasmic" evidence="2">
    <location>
        <begin position="1"/>
        <end position="10"/>
    </location>
</feature>
<feature type="transmembrane region" description="Helical" evidence="2">
    <location>
        <begin position="11"/>
        <end position="31"/>
    </location>
</feature>
<feature type="topological domain" description="Periplasmic" evidence="2">
    <location>
        <begin position="32"/>
        <end position="50"/>
    </location>
</feature>
<feature type="transmembrane region" description="Helical" evidence="2">
    <location>
        <begin position="51"/>
        <end position="71"/>
    </location>
</feature>
<feature type="topological domain" description="Cytoplasmic" evidence="2">
    <location>
        <begin position="72"/>
        <end position="77"/>
    </location>
</feature>
<feature type="transmembrane region" description="Helical" evidence="2">
    <location>
        <begin position="78"/>
        <end position="98"/>
    </location>
</feature>
<feature type="topological domain" description="Periplasmic" evidence="2">
    <location>
        <begin position="99"/>
        <end position="100"/>
    </location>
</feature>
<feature type="transmembrane region" description="Helical" evidence="2">
    <location>
        <begin position="101"/>
        <end position="121"/>
    </location>
</feature>
<feature type="topological domain" description="Cytoplasmic" evidence="2">
    <location>
        <begin position="122"/>
        <end position="133"/>
    </location>
</feature>
<feature type="transmembrane region" description="Helical" evidence="2">
    <location>
        <begin position="134"/>
        <end position="154"/>
    </location>
</feature>
<feature type="topological domain" description="Periplasmic" evidence="2">
    <location>
        <begin position="155"/>
        <end position="161"/>
    </location>
</feature>
<feature type="transmembrane region" description="Helical" evidence="2">
    <location>
        <begin position="162"/>
        <end position="182"/>
    </location>
</feature>
<feature type="topological domain" description="Cytoplasmic" evidence="2">
    <location>
        <begin position="183"/>
        <end position="205"/>
    </location>
</feature>
<feature type="transmembrane region" description="Helical" evidence="2">
    <location>
        <begin position="206"/>
        <end position="226"/>
    </location>
</feature>
<feature type="topological domain" description="Periplasmic" evidence="2">
    <location>
        <begin position="227"/>
        <end position="244"/>
    </location>
</feature>
<feature type="transmembrane region" description="Helical" evidence="2">
    <location>
        <begin position="245"/>
        <end position="265"/>
    </location>
</feature>
<feature type="topological domain" description="Cytoplasmic" evidence="2">
    <location>
        <begin position="266"/>
        <end position="272"/>
    </location>
</feature>
<feature type="transmembrane region" description="Helical" evidence="2">
    <location>
        <begin position="273"/>
        <end position="293"/>
    </location>
</feature>
<feature type="topological domain" description="Periplasmic" evidence="2">
    <location>
        <begin position="294"/>
        <end position="296"/>
    </location>
</feature>
<feature type="transmembrane region" description="Helical" evidence="2">
    <location>
        <begin position="297"/>
        <end position="317"/>
    </location>
</feature>
<feature type="topological domain" description="Cytoplasmic" evidence="2">
    <location>
        <begin position="318"/>
        <end position="331"/>
    </location>
</feature>
<feature type="transmembrane region" description="Helical" evidence="2">
    <location>
        <begin position="332"/>
        <end position="352"/>
    </location>
</feature>
<feature type="topological domain" description="Periplasmic" evidence="2">
    <location>
        <begin position="353"/>
        <end position="360"/>
    </location>
</feature>
<feature type="transmembrane region" description="Helical" evidence="2">
    <location>
        <begin position="361"/>
        <end position="381"/>
    </location>
</feature>
<feature type="topological domain" description="Cytoplasmic" evidence="2">
    <location>
        <begin position="382"/>
        <end position="393"/>
    </location>
</feature>
<organism>
    <name type="scientific">Shigella flexneri</name>
    <dbReference type="NCBI Taxonomy" id="623"/>
    <lineage>
        <taxon>Bacteria</taxon>
        <taxon>Pseudomonadati</taxon>
        <taxon>Pseudomonadota</taxon>
        <taxon>Gammaproteobacteria</taxon>
        <taxon>Enterobacterales</taxon>
        <taxon>Enterobacteriaceae</taxon>
        <taxon>Shigella</taxon>
    </lineage>
</organism>
<sequence length="393" mass="43262">MTNSNRIKLTWISFLSYALTGALVIVTGMVMGNIADYFNLPVSSMSNTFTFLNAGILISIFLNAWLMEIVPLKTQLRFGFLLMVLAVAGLMFSHSLALFSTAMFILGVVSGITMSIGTFLITQMYEGRQRGSRLLFTDSFFSMAGMIFPMIAAFLLARSIEWYWVYACIGLVYVAIFILTFGCEFPALGKRAPKTDAPVEKEKWGIGVLFLSVAALCYILGQLGFISWVPEYAKGLGMSLNDAGTLVSNFWMSYMVGMWAFSFILRFFDLQRILTVLAGLAAILMYVFNTGTPVHMAWSILALGFFSSAIYTTIITLGSQQTKVPSPKLVNFVLTCGTIGTMLTFVVTGTIVEHSGPQAALLTANGLYAVVFVMCFLLGFVSRHRQHNTLTSH</sequence>
<reference key="1">
    <citation type="journal article" date="2002" name="Nucleic Acids Res.">
        <title>Genome sequence of Shigella flexneri 2a: insights into pathogenicity through comparison with genomes of Escherichia coli K12 and O157.</title>
        <authorList>
            <person name="Jin Q."/>
            <person name="Yuan Z."/>
            <person name="Xu J."/>
            <person name="Wang Y."/>
            <person name="Shen Y."/>
            <person name="Lu W."/>
            <person name="Wang J."/>
            <person name="Liu H."/>
            <person name="Yang J."/>
            <person name="Yang F."/>
            <person name="Zhang X."/>
            <person name="Zhang J."/>
            <person name="Yang G."/>
            <person name="Wu H."/>
            <person name="Qu D."/>
            <person name="Dong J."/>
            <person name="Sun L."/>
            <person name="Xue Y."/>
            <person name="Zhao A."/>
            <person name="Gao Y."/>
            <person name="Zhu J."/>
            <person name="Kan B."/>
            <person name="Ding K."/>
            <person name="Chen S."/>
            <person name="Cheng H."/>
            <person name="Yao Z."/>
            <person name="He B."/>
            <person name="Chen R."/>
            <person name="Ma D."/>
            <person name="Qiang B."/>
            <person name="Wen Y."/>
            <person name="Hou Y."/>
            <person name="Yu J."/>
        </authorList>
    </citation>
    <scope>NUCLEOTIDE SEQUENCE [LARGE SCALE GENOMIC DNA]</scope>
    <source>
        <strain>301 / Serotype 2a</strain>
    </source>
</reference>
<reference key="2">
    <citation type="journal article" date="2003" name="Infect. Immun.">
        <title>Complete genome sequence and comparative genomics of Shigella flexneri serotype 2a strain 2457T.</title>
        <authorList>
            <person name="Wei J."/>
            <person name="Goldberg M.B."/>
            <person name="Burland V."/>
            <person name="Venkatesan M.M."/>
            <person name="Deng W."/>
            <person name="Fournier G."/>
            <person name="Mayhew G.F."/>
            <person name="Plunkett G. III"/>
            <person name="Rose D.J."/>
            <person name="Darling A."/>
            <person name="Mau B."/>
            <person name="Perna N.T."/>
            <person name="Payne S.M."/>
            <person name="Runyen-Janecky L.J."/>
            <person name="Zhou S."/>
            <person name="Schwartz D.C."/>
            <person name="Blattner F.R."/>
        </authorList>
    </citation>
    <scope>NUCLEOTIDE SEQUENCE [LARGE SCALE GENOMIC DNA]</scope>
    <source>
        <strain>ATCC 700930 / 2457T / Serotype 2a</strain>
    </source>
</reference>
<comment type="subcellular location">
    <subcellularLocation>
        <location evidence="1">Cell inner membrane</location>
        <topology evidence="1">Multi-pass membrane protein</topology>
    </subcellularLocation>
</comment>
<comment type="similarity">
    <text evidence="3">Belongs to the major facilitator superfamily. TsgA family.</text>
</comment>
<accession>P59269</accession>